<protein>
    <recommendedName>
        <fullName evidence="1">Peptidyl-tRNA hydrolase</fullName>
        <shortName evidence="1">Pth</shortName>
        <ecNumber evidence="1">3.1.1.29</ecNumber>
    </recommendedName>
</protein>
<keyword id="KW-0963">Cytoplasm</keyword>
<keyword id="KW-0378">Hydrolase</keyword>
<keyword id="KW-1185">Reference proteome</keyword>
<keyword id="KW-0694">RNA-binding</keyword>
<keyword id="KW-0820">tRNA-binding</keyword>
<feature type="chain" id="PRO_1000075343" description="Peptidyl-tRNA hydrolase">
    <location>
        <begin position="1"/>
        <end position="191"/>
    </location>
</feature>
<feature type="active site" description="Proton acceptor" evidence="1">
    <location>
        <position position="21"/>
    </location>
</feature>
<feature type="binding site" evidence="1">
    <location>
        <position position="16"/>
    </location>
    <ligand>
        <name>tRNA</name>
        <dbReference type="ChEBI" id="CHEBI:17843"/>
    </ligand>
</feature>
<feature type="binding site" evidence="1">
    <location>
        <position position="66"/>
    </location>
    <ligand>
        <name>tRNA</name>
        <dbReference type="ChEBI" id="CHEBI:17843"/>
    </ligand>
</feature>
<feature type="binding site" evidence="1">
    <location>
        <position position="68"/>
    </location>
    <ligand>
        <name>tRNA</name>
        <dbReference type="ChEBI" id="CHEBI:17843"/>
    </ligand>
</feature>
<feature type="binding site" evidence="1">
    <location>
        <position position="114"/>
    </location>
    <ligand>
        <name>tRNA</name>
        <dbReference type="ChEBI" id="CHEBI:17843"/>
    </ligand>
</feature>
<feature type="site" description="Discriminates between blocked and unblocked aminoacyl-tRNA" evidence="1">
    <location>
        <position position="11"/>
    </location>
</feature>
<feature type="site" description="Stabilizes the basic form of H active site to accept a proton" evidence="1">
    <location>
        <position position="93"/>
    </location>
</feature>
<comment type="function">
    <text evidence="1">Hydrolyzes ribosome-free peptidyl-tRNAs (with 1 or more amino acids incorporated), which drop off the ribosome during protein synthesis, or as a result of ribosome stalling.</text>
</comment>
<comment type="function">
    <text evidence="1">Catalyzes the release of premature peptidyl moieties from peptidyl-tRNA molecules trapped in stalled 50S ribosomal subunits, and thus maintains levels of free tRNAs and 50S ribosomes.</text>
</comment>
<comment type="catalytic activity">
    <reaction evidence="1">
        <text>an N-acyl-L-alpha-aminoacyl-tRNA + H2O = an N-acyl-L-amino acid + a tRNA + H(+)</text>
        <dbReference type="Rhea" id="RHEA:54448"/>
        <dbReference type="Rhea" id="RHEA-COMP:10123"/>
        <dbReference type="Rhea" id="RHEA-COMP:13883"/>
        <dbReference type="ChEBI" id="CHEBI:15377"/>
        <dbReference type="ChEBI" id="CHEBI:15378"/>
        <dbReference type="ChEBI" id="CHEBI:59874"/>
        <dbReference type="ChEBI" id="CHEBI:78442"/>
        <dbReference type="ChEBI" id="CHEBI:138191"/>
        <dbReference type="EC" id="3.1.1.29"/>
    </reaction>
</comment>
<comment type="subunit">
    <text evidence="1">Monomer.</text>
</comment>
<comment type="subcellular location">
    <subcellularLocation>
        <location evidence="1">Cytoplasm</location>
    </subcellularLocation>
</comment>
<comment type="similarity">
    <text evidence="1">Belongs to the PTH family.</text>
</comment>
<dbReference type="EC" id="3.1.1.29" evidence="1"/>
<dbReference type="EMBL" id="CP000698">
    <property type="protein sequence ID" value="ABQ27833.1"/>
    <property type="molecule type" value="Genomic_DNA"/>
</dbReference>
<dbReference type="RefSeq" id="WP_011940486.1">
    <property type="nucleotide sequence ID" value="NC_009483.1"/>
</dbReference>
<dbReference type="SMR" id="A5G7R5"/>
<dbReference type="STRING" id="351605.Gura_3680"/>
<dbReference type="KEGG" id="gur:Gura_3680"/>
<dbReference type="HOGENOM" id="CLU_062456_4_1_7"/>
<dbReference type="OrthoDB" id="9800507at2"/>
<dbReference type="Proteomes" id="UP000006695">
    <property type="component" value="Chromosome"/>
</dbReference>
<dbReference type="GO" id="GO:0005737">
    <property type="term" value="C:cytoplasm"/>
    <property type="evidence" value="ECO:0007669"/>
    <property type="project" value="UniProtKB-SubCell"/>
</dbReference>
<dbReference type="GO" id="GO:0004045">
    <property type="term" value="F:peptidyl-tRNA hydrolase activity"/>
    <property type="evidence" value="ECO:0007669"/>
    <property type="project" value="UniProtKB-UniRule"/>
</dbReference>
<dbReference type="GO" id="GO:0000049">
    <property type="term" value="F:tRNA binding"/>
    <property type="evidence" value="ECO:0007669"/>
    <property type="project" value="UniProtKB-UniRule"/>
</dbReference>
<dbReference type="GO" id="GO:0006515">
    <property type="term" value="P:protein quality control for misfolded or incompletely synthesized proteins"/>
    <property type="evidence" value="ECO:0007669"/>
    <property type="project" value="UniProtKB-UniRule"/>
</dbReference>
<dbReference type="GO" id="GO:0072344">
    <property type="term" value="P:rescue of stalled ribosome"/>
    <property type="evidence" value="ECO:0007669"/>
    <property type="project" value="UniProtKB-UniRule"/>
</dbReference>
<dbReference type="CDD" id="cd00462">
    <property type="entry name" value="PTH"/>
    <property type="match status" value="1"/>
</dbReference>
<dbReference type="FunFam" id="3.40.50.1470:FF:000001">
    <property type="entry name" value="Peptidyl-tRNA hydrolase"/>
    <property type="match status" value="1"/>
</dbReference>
<dbReference type="Gene3D" id="3.40.50.1470">
    <property type="entry name" value="Peptidyl-tRNA hydrolase"/>
    <property type="match status" value="1"/>
</dbReference>
<dbReference type="HAMAP" id="MF_00083">
    <property type="entry name" value="Pept_tRNA_hydro_bact"/>
    <property type="match status" value="1"/>
</dbReference>
<dbReference type="InterPro" id="IPR001328">
    <property type="entry name" value="Pept_tRNA_hydro"/>
</dbReference>
<dbReference type="InterPro" id="IPR018171">
    <property type="entry name" value="Pept_tRNA_hydro_CS"/>
</dbReference>
<dbReference type="InterPro" id="IPR036416">
    <property type="entry name" value="Pept_tRNA_hydro_sf"/>
</dbReference>
<dbReference type="NCBIfam" id="TIGR00447">
    <property type="entry name" value="pth"/>
    <property type="match status" value="1"/>
</dbReference>
<dbReference type="PANTHER" id="PTHR17224">
    <property type="entry name" value="PEPTIDYL-TRNA HYDROLASE"/>
    <property type="match status" value="1"/>
</dbReference>
<dbReference type="PANTHER" id="PTHR17224:SF1">
    <property type="entry name" value="PEPTIDYL-TRNA HYDROLASE"/>
    <property type="match status" value="1"/>
</dbReference>
<dbReference type="Pfam" id="PF01195">
    <property type="entry name" value="Pept_tRNA_hydro"/>
    <property type="match status" value="1"/>
</dbReference>
<dbReference type="SUPFAM" id="SSF53178">
    <property type="entry name" value="Peptidyl-tRNA hydrolase-like"/>
    <property type="match status" value="1"/>
</dbReference>
<dbReference type="PROSITE" id="PS01195">
    <property type="entry name" value="PEPT_TRNA_HYDROL_1"/>
    <property type="match status" value="1"/>
</dbReference>
<dbReference type="PROSITE" id="PS01196">
    <property type="entry name" value="PEPT_TRNA_HYDROL_2"/>
    <property type="match status" value="1"/>
</dbReference>
<accession>A5G7R5</accession>
<sequence length="191" mass="20995">MAVKLIVGLGNPGPKYQWTRHNAGFMVLDRLSHLTGITVTRKNFSGLCGEGSWQGDRLILLKPQTFMNLSGRSVAEALRFHKLTVEDLIVIHDDLDIPFGRVKLKAGGGHAGHNGLRSLSQELGSGAFLRVRMGIGRPLHGDVVNYVLSNFSPEEMIGLPRLLDGIVDLLEMLITEGLPKTMSLYNNKELL</sequence>
<evidence type="ECO:0000255" key="1">
    <source>
        <dbReference type="HAMAP-Rule" id="MF_00083"/>
    </source>
</evidence>
<reference key="1">
    <citation type="submission" date="2007-05" db="EMBL/GenBank/DDBJ databases">
        <title>Complete sequence of Geobacter uraniireducens Rf4.</title>
        <authorList>
            <consortium name="US DOE Joint Genome Institute"/>
            <person name="Copeland A."/>
            <person name="Lucas S."/>
            <person name="Lapidus A."/>
            <person name="Barry K."/>
            <person name="Detter J.C."/>
            <person name="Glavina del Rio T."/>
            <person name="Hammon N."/>
            <person name="Israni S."/>
            <person name="Dalin E."/>
            <person name="Tice H."/>
            <person name="Pitluck S."/>
            <person name="Chertkov O."/>
            <person name="Brettin T."/>
            <person name="Bruce D."/>
            <person name="Han C."/>
            <person name="Schmutz J."/>
            <person name="Larimer F."/>
            <person name="Land M."/>
            <person name="Hauser L."/>
            <person name="Kyrpides N."/>
            <person name="Mikhailova N."/>
            <person name="Shelobolina E."/>
            <person name="Aklujkar M."/>
            <person name="Lovley D."/>
            <person name="Richardson P."/>
        </authorList>
    </citation>
    <scope>NUCLEOTIDE SEQUENCE [LARGE SCALE GENOMIC DNA]</scope>
    <source>
        <strain>ATCC BAA-1134 / JCM 13001 / Rf4</strain>
    </source>
</reference>
<proteinExistence type="inferred from homology"/>
<organism>
    <name type="scientific">Geotalea uraniireducens (strain Rf4)</name>
    <name type="common">Geobacter uraniireducens</name>
    <dbReference type="NCBI Taxonomy" id="351605"/>
    <lineage>
        <taxon>Bacteria</taxon>
        <taxon>Pseudomonadati</taxon>
        <taxon>Thermodesulfobacteriota</taxon>
        <taxon>Desulfuromonadia</taxon>
        <taxon>Geobacterales</taxon>
        <taxon>Geobacteraceae</taxon>
        <taxon>Geotalea</taxon>
    </lineage>
</organism>
<gene>
    <name evidence="1" type="primary">pth</name>
    <name type="ordered locus">Gura_3680</name>
</gene>
<name>PTH_GEOUR</name>